<reference key="1">
    <citation type="journal article" date="2004" name="Proc. Natl. Acad. Sci. U.S.A.">
        <title>The complete genomic sequence of Nocardia farcinica IFM 10152.</title>
        <authorList>
            <person name="Ishikawa J."/>
            <person name="Yamashita A."/>
            <person name="Mikami Y."/>
            <person name="Hoshino Y."/>
            <person name="Kurita H."/>
            <person name="Hotta K."/>
            <person name="Shiba T."/>
            <person name="Hattori M."/>
        </authorList>
    </citation>
    <scope>NUCLEOTIDE SEQUENCE [LARGE SCALE GENOMIC DNA]</scope>
    <source>
        <strain>IFM 10152</strain>
    </source>
</reference>
<keyword id="KW-0028">Amino-acid biosynthesis</keyword>
<keyword id="KW-0963">Cytoplasm</keyword>
<keyword id="KW-0315">Glutamine amidotransferase</keyword>
<keyword id="KW-0368">Histidine biosynthesis</keyword>
<keyword id="KW-0378">Hydrolase</keyword>
<keyword id="KW-0456">Lyase</keyword>
<keyword id="KW-1185">Reference proteome</keyword>
<accession>Q5YYP7</accession>
<feature type="chain" id="PRO_0000231741" description="Imidazole glycerol phosphate synthase subunit HisH">
    <location>
        <begin position="1"/>
        <end position="211"/>
    </location>
</feature>
<feature type="domain" description="Glutamine amidotransferase type-1" evidence="1">
    <location>
        <begin position="5"/>
        <end position="211"/>
    </location>
</feature>
<feature type="active site" description="Nucleophile" evidence="1">
    <location>
        <position position="83"/>
    </location>
</feature>
<feature type="active site" evidence="1">
    <location>
        <position position="192"/>
    </location>
</feature>
<feature type="active site" evidence="1">
    <location>
        <position position="194"/>
    </location>
</feature>
<gene>
    <name evidence="1" type="primary">hisH</name>
    <name type="ordered locus">NFA_18480</name>
</gene>
<name>HIS5_NOCFA</name>
<evidence type="ECO:0000255" key="1">
    <source>
        <dbReference type="HAMAP-Rule" id="MF_00278"/>
    </source>
</evidence>
<sequence>MTRKSVALLDYGSGNLHSAERALVRAGADVRVTADPDAALAVDGLVVPGVGAFAACMAGLRAVRGEKIIGQRLAGGRPVLGICVGMQILFERGVEFGVETEGCAEWPGVVERLDAPVLPHMGWNTVSAPADSVLFAGMDADTRFYFVHSYAAQRWELPPNEHFAAPKLTWAEHGVRFLAAVENGPLSATQFHPEKSGDAGAQLLRNWVDSL</sequence>
<protein>
    <recommendedName>
        <fullName evidence="1">Imidazole glycerol phosphate synthase subunit HisH</fullName>
        <ecNumber evidence="1">4.3.2.10</ecNumber>
    </recommendedName>
    <alternativeName>
        <fullName evidence="1">IGP synthase glutaminase subunit</fullName>
        <ecNumber evidence="1">3.5.1.2</ecNumber>
    </alternativeName>
    <alternativeName>
        <fullName evidence="1">IGP synthase subunit HisH</fullName>
    </alternativeName>
    <alternativeName>
        <fullName evidence="1">ImGP synthase subunit HisH</fullName>
        <shortName evidence="1">IGPS subunit HisH</shortName>
    </alternativeName>
</protein>
<dbReference type="EC" id="4.3.2.10" evidence="1"/>
<dbReference type="EC" id="3.5.1.2" evidence="1"/>
<dbReference type="EMBL" id="AP006618">
    <property type="protein sequence ID" value="BAD56694.1"/>
    <property type="molecule type" value="Genomic_DNA"/>
</dbReference>
<dbReference type="RefSeq" id="WP_011208379.1">
    <property type="nucleotide sequence ID" value="NC_006361.1"/>
</dbReference>
<dbReference type="SMR" id="Q5YYP7"/>
<dbReference type="STRING" id="247156.NFA_18480"/>
<dbReference type="GeneID" id="61132632"/>
<dbReference type="KEGG" id="nfa:NFA_18480"/>
<dbReference type="eggNOG" id="COG0118">
    <property type="taxonomic scope" value="Bacteria"/>
</dbReference>
<dbReference type="HOGENOM" id="CLU_071837_1_0_11"/>
<dbReference type="OrthoDB" id="9807137at2"/>
<dbReference type="UniPathway" id="UPA00031">
    <property type="reaction ID" value="UER00010"/>
</dbReference>
<dbReference type="Proteomes" id="UP000006820">
    <property type="component" value="Chromosome"/>
</dbReference>
<dbReference type="GO" id="GO:0005737">
    <property type="term" value="C:cytoplasm"/>
    <property type="evidence" value="ECO:0007669"/>
    <property type="project" value="UniProtKB-SubCell"/>
</dbReference>
<dbReference type="GO" id="GO:0004359">
    <property type="term" value="F:glutaminase activity"/>
    <property type="evidence" value="ECO:0007669"/>
    <property type="project" value="UniProtKB-EC"/>
</dbReference>
<dbReference type="GO" id="GO:0000107">
    <property type="term" value="F:imidazoleglycerol-phosphate synthase activity"/>
    <property type="evidence" value="ECO:0007669"/>
    <property type="project" value="UniProtKB-UniRule"/>
</dbReference>
<dbReference type="GO" id="GO:0016829">
    <property type="term" value="F:lyase activity"/>
    <property type="evidence" value="ECO:0007669"/>
    <property type="project" value="UniProtKB-KW"/>
</dbReference>
<dbReference type="GO" id="GO:0000105">
    <property type="term" value="P:L-histidine biosynthetic process"/>
    <property type="evidence" value="ECO:0007669"/>
    <property type="project" value="UniProtKB-UniRule"/>
</dbReference>
<dbReference type="CDD" id="cd01748">
    <property type="entry name" value="GATase1_IGP_Synthase"/>
    <property type="match status" value="1"/>
</dbReference>
<dbReference type="FunFam" id="3.40.50.880:FF:000056">
    <property type="entry name" value="Imidazole glycerol phosphate synthase subunit HisH"/>
    <property type="match status" value="1"/>
</dbReference>
<dbReference type="Gene3D" id="3.40.50.880">
    <property type="match status" value="1"/>
</dbReference>
<dbReference type="HAMAP" id="MF_00278">
    <property type="entry name" value="HisH"/>
    <property type="match status" value="1"/>
</dbReference>
<dbReference type="InterPro" id="IPR029062">
    <property type="entry name" value="Class_I_gatase-like"/>
</dbReference>
<dbReference type="InterPro" id="IPR017926">
    <property type="entry name" value="GATASE"/>
</dbReference>
<dbReference type="InterPro" id="IPR010139">
    <property type="entry name" value="Imidazole-glycPsynth_HisH"/>
</dbReference>
<dbReference type="NCBIfam" id="TIGR01855">
    <property type="entry name" value="IMP_synth_hisH"/>
    <property type="match status" value="1"/>
</dbReference>
<dbReference type="PANTHER" id="PTHR42701">
    <property type="entry name" value="IMIDAZOLE GLYCEROL PHOSPHATE SYNTHASE SUBUNIT HISH"/>
    <property type="match status" value="1"/>
</dbReference>
<dbReference type="PANTHER" id="PTHR42701:SF1">
    <property type="entry name" value="IMIDAZOLE GLYCEROL PHOSPHATE SYNTHASE SUBUNIT HISH"/>
    <property type="match status" value="1"/>
</dbReference>
<dbReference type="Pfam" id="PF00117">
    <property type="entry name" value="GATase"/>
    <property type="match status" value="1"/>
</dbReference>
<dbReference type="PIRSF" id="PIRSF000495">
    <property type="entry name" value="Amidotransf_hisH"/>
    <property type="match status" value="1"/>
</dbReference>
<dbReference type="SUPFAM" id="SSF52317">
    <property type="entry name" value="Class I glutamine amidotransferase-like"/>
    <property type="match status" value="1"/>
</dbReference>
<dbReference type="PROSITE" id="PS51273">
    <property type="entry name" value="GATASE_TYPE_1"/>
    <property type="match status" value="1"/>
</dbReference>
<comment type="function">
    <text evidence="1">IGPS catalyzes the conversion of PRFAR and glutamine to IGP, AICAR and glutamate. The HisH subunit catalyzes the hydrolysis of glutamine to glutamate and ammonia as part of the synthesis of IGP and AICAR. The resulting ammonia molecule is channeled to the active site of HisF.</text>
</comment>
<comment type="catalytic activity">
    <reaction evidence="1">
        <text>5-[(5-phospho-1-deoxy-D-ribulos-1-ylimino)methylamino]-1-(5-phospho-beta-D-ribosyl)imidazole-4-carboxamide + L-glutamine = D-erythro-1-(imidazol-4-yl)glycerol 3-phosphate + 5-amino-1-(5-phospho-beta-D-ribosyl)imidazole-4-carboxamide + L-glutamate + H(+)</text>
        <dbReference type="Rhea" id="RHEA:24793"/>
        <dbReference type="ChEBI" id="CHEBI:15378"/>
        <dbReference type="ChEBI" id="CHEBI:29985"/>
        <dbReference type="ChEBI" id="CHEBI:58278"/>
        <dbReference type="ChEBI" id="CHEBI:58359"/>
        <dbReference type="ChEBI" id="CHEBI:58475"/>
        <dbReference type="ChEBI" id="CHEBI:58525"/>
        <dbReference type="EC" id="4.3.2.10"/>
    </reaction>
</comment>
<comment type="catalytic activity">
    <reaction evidence="1">
        <text>L-glutamine + H2O = L-glutamate + NH4(+)</text>
        <dbReference type="Rhea" id="RHEA:15889"/>
        <dbReference type="ChEBI" id="CHEBI:15377"/>
        <dbReference type="ChEBI" id="CHEBI:28938"/>
        <dbReference type="ChEBI" id="CHEBI:29985"/>
        <dbReference type="ChEBI" id="CHEBI:58359"/>
        <dbReference type="EC" id="3.5.1.2"/>
    </reaction>
</comment>
<comment type="pathway">
    <text evidence="1">Amino-acid biosynthesis; L-histidine biosynthesis; L-histidine from 5-phospho-alpha-D-ribose 1-diphosphate: step 5/9.</text>
</comment>
<comment type="subunit">
    <text evidence="1">Heterodimer of HisH and HisF.</text>
</comment>
<comment type="subcellular location">
    <subcellularLocation>
        <location evidence="1">Cytoplasm</location>
    </subcellularLocation>
</comment>
<organism>
    <name type="scientific">Nocardia farcinica (strain IFM 10152)</name>
    <dbReference type="NCBI Taxonomy" id="247156"/>
    <lineage>
        <taxon>Bacteria</taxon>
        <taxon>Bacillati</taxon>
        <taxon>Actinomycetota</taxon>
        <taxon>Actinomycetes</taxon>
        <taxon>Mycobacteriales</taxon>
        <taxon>Nocardiaceae</taxon>
        <taxon>Nocardia</taxon>
    </lineage>
</organism>
<proteinExistence type="inferred from homology"/>